<proteinExistence type="inferred from homology"/>
<comment type="function">
    <text>Catalyzes the isomerization between 2-isopropylmalate and 3-isopropylmalate, via the formation of 2-isopropylmaleate.</text>
</comment>
<comment type="catalytic activity">
    <reaction>
        <text>(2R,3S)-3-isopropylmalate = (2S)-2-isopropylmalate</text>
        <dbReference type="Rhea" id="RHEA:32287"/>
        <dbReference type="ChEBI" id="CHEBI:1178"/>
        <dbReference type="ChEBI" id="CHEBI:35121"/>
        <dbReference type="EC" id="4.2.1.33"/>
    </reaction>
</comment>
<comment type="cofactor">
    <cofactor evidence="1">
        <name>[4Fe-4S] cluster</name>
        <dbReference type="ChEBI" id="CHEBI:49883"/>
    </cofactor>
    <text evidence="1">Binds 1 [4Fe-4S] cluster per subunit.</text>
</comment>
<comment type="pathway">
    <text>Amino-acid biosynthesis; L-leucine biosynthesis; L-leucine from 3-methyl-2-oxobutanoate: step 2/4.</text>
</comment>
<comment type="subunit">
    <text>Monomer.</text>
</comment>
<comment type="similarity">
    <text evidence="3">Belongs to the aconitase/IPM isomerase family.</text>
</comment>
<organism>
    <name type="scientific">Mucor circinelloides f. lusitanicus</name>
    <name type="common">Mucor racemosus var. lusitanicus</name>
    <dbReference type="NCBI Taxonomy" id="29924"/>
    <lineage>
        <taxon>Eukaryota</taxon>
        <taxon>Fungi</taxon>
        <taxon>Fungi incertae sedis</taxon>
        <taxon>Mucoromycota</taxon>
        <taxon>Mucoromycotina</taxon>
        <taxon>Mucoromycetes</taxon>
        <taxon>Mucorales</taxon>
        <taxon>Mucorineae</taxon>
        <taxon>Mucoraceae</taxon>
        <taxon>Mucor</taxon>
    </lineage>
</organism>
<reference key="1">
    <citation type="journal article" date="1989" name="Gene">
        <title>Characterization of a leuA gene and an ARS element from Mucor circinelloides.</title>
        <authorList>
            <person name="Isabel M."/>
            <person name="Roncero G."/>
            <person name="Jepsen L.P."/>
            <person name="Stroeman P."/>
            <person name="van Heeswijck R."/>
        </authorList>
    </citation>
    <scope>NUCLEOTIDE SEQUENCE [GENOMIC DNA]</scope>
    <source>
        <strain>ATCC 1216b / BCRC 32522 / CBS 277.49 / NRRL 3631</strain>
    </source>
</reference>
<evidence type="ECO:0000250" key="1"/>
<evidence type="ECO:0000256" key="2">
    <source>
        <dbReference type="SAM" id="MobiDB-lite"/>
    </source>
</evidence>
<evidence type="ECO:0000305" key="3"/>
<protein>
    <recommendedName>
        <fullName>3-isopropylmalate dehydratase</fullName>
        <ecNumber>4.2.1.33</ecNumber>
    </recommendedName>
    <alternativeName>
        <fullName>Alpha-IPM isomerase</fullName>
        <shortName>IPMI</shortName>
    </alternativeName>
    <alternativeName>
        <fullName>Isopropylmalate isomerase</fullName>
    </alternativeName>
</protein>
<keyword id="KW-0004">4Fe-4S</keyword>
<keyword id="KW-0028">Amino-acid biosynthesis</keyword>
<keyword id="KW-0100">Branched-chain amino acid biosynthesis</keyword>
<keyword id="KW-0408">Iron</keyword>
<keyword id="KW-0411">Iron-sulfur</keyword>
<keyword id="KW-0432">Leucine biosynthesis</keyword>
<keyword id="KW-0456">Lyase</keyword>
<keyword id="KW-0479">Metal-binding</keyword>
<name>LEUC_MUCCL</name>
<gene>
    <name type="primary">LEUA</name>
</gene>
<sequence length="644" mass="69939">MISSISLSQDKCKYLLYNNLLVDERENFLVSLTCSYILFQKTIPYIQNVSTLYDKVWDDHVIDQQEDGTCLIYIDRHLVHEVTSPQAFEGLRNANRPVRRPDCTLATVDHNIPTTTRKIFKNITTFIKEADSRTQCETLEQNIEAFGLTYFGMEDSRQGIVHVIGPEQGFTLPATTVVCGDSHTSTHGAFGALAFGIGTSEVEHVLATQTLLQKKSKNMRIRVQGKALPGVTSKDIVLHIIGVIGTAGGTGCVIEFCGDTIAALSMESRMSICNMSIEAGARAGMVAPDEVTFEYLRDKPLAPKGADWDRAVKYWKSLSSDADAKYDINVEINAADIAPTLTWGTSPQDVVPITGSTPDPAKIEDPIRRSAVQRALDYIGIAPNTPMEGVKVDKVFIGSCTNSRIEDLRAAAAVVKGKRAAEWVDAMVVPGSGLVKRQAEREGLDKIFTDAGFDWREAGCSMCLGMNPDQLKPGERCASTSNRNFEGRQGAGGRTHLVSPAMAAAAGIKGCLTDVRNMEVSEIPGTPKQSPRQEVVAEFESEEDDVDSSSVDSAPVATPPSTGDSAGMPKFTTLKGYAAPLDISNVDTDMIIPKQFLKTIKRTGLGSALFYALRFDPATGAENPDFVLNLRALPSRTYLGLHRS</sequence>
<feature type="chain" id="PRO_0000076891" description="3-isopropylmalate dehydratase">
    <location>
        <begin position="1"/>
        <end position="644"/>
    </location>
</feature>
<feature type="region of interest" description="Disordered" evidence="2">
    <location>
        <begin position="521"/>
        <end position="568"/>
    </location>
</feature>
<feature type="compositionally biased region" description="Acidic residues" evidence="2">
    <location>
        <begin position="537"/>
        <end position="547"/>
    </location>
</feature>
<feature type="binding site" evidence="1">
    <location>
        <position position="400"/>
    </location>
    <ligand>
        <name>[4Fe-4S] cluster</name>
        <dbReference type="ChEBI" id="CHEBI:49883"/>
    </ligand>
</feature>
<feature type="binding site" evidence="1">
    <location>
        <position position="460"/>
    </location>
    <ligand>
        <name>[4Fe-4S] cluster</name>
        <dbReference type="ChEBI" id="CHEBI:49883"/>
    </ligand>
</feature>
<feature type="binding site" evidence="1">
    <location>
        <position position="463"/>
    </location>
    <ligand>
        <name>[4Fe-4S] cluster</name>
        <dbReference type="ChEBI" id="CHEBI:49883"/>
    </ligand>
</feature>
<dbReference type="EC" id="4.2.1.33"/>
<dbReference type="EMBL" id="M33166">
    <property type="protein sequence ID" value="AAA33422.1"/>
    <property type="molecule type" value="Genomic_DNA"/>
</dbReference>
<dbReference type="PIR" id="JQ0160">
    <property type="entry name" value="JQ0160"/>
</dbReference>
<dbReference type="SMR" id="P17279"/>
<dbReference type="UniPathway" id="UPA00048">
    <property type="reaction ID" value="UER00071"/>
</dbReference>
<dbReference type="GO" id="GO:0003861">
    <property type="term" value="F:3-isopropylmalate dehydratase activity"/>
    <property type="evidence" value="ECO:0007669"/>
    <property type="project" value="UniProtKB-EC"/>
</dbReference>
<dbReference type="GO" id="GO:0051539">
    <property type="term" value="F:4 iron, 4 sulfur cluster binding"/>
    <property type="evidence" value="ECO:0007669"/>
    <property type="project" value="UniProtKB-KW"/>
</dbReference>
<dbReference type="GO" id="GO:0046872">
    <property type="term" value="F:metal ion binding"/>
    <property type="evidence" value="ECO:0007669"/>
    <property type="project" value="UniProtKB-KW"/>
</dbReference>
<dbReference type="GO" id="GO:0009098">
    <property type="term" value="P:L-leucine biosynthetic process"/>
    <property type="evidence" value="ECO:0007669"/>
    <property type="project" value="UniProtKB-UniPathway"/>
</dbReference>
<dbReference type="CDD" id="cd01583">
    <property type="entry name" value="IPMI"/>
    <property type="match status" value="1"/>
</dbReference>
<dbReference type="FunFam" id="3.30.499.10:FF:000006">
    <property type="entry name" value="3-isopropylmalate dehydratase large subunit"/>
    <property type="match status" value="1"/>
</dbReference>
<dbReference type="FunFam" id="3.30.499.10:FF:000007">
    <property type="entry name" value="3-isopropylmalate dehydratase large subunit"/>
    <property type="match status" value="1"/>
</dbReference>
<dbReference type="Gene3D" id="3.30.499.10">
    <property type="entry name" value="Aconitase, domain 3"/>
    <property type="match status" value="2"/>
</dbReference>
<dbReference type="Gene3D" id="3.20.19.10">
    <property type="entry name" value="Aconitase, domain 4"/>
    <property type="match status" value="1"/>
</dbReference>
<dbReference type="HAMAP" id="MF_01026">
    <property type="entry name" value="LeuC_type1"/>
    <property type="match status" value="1"/>
</dbReference>
<dbReference type="InterPro" id="IPR004430">
    <property type="entry name" value="3-IsopropMal_deHydase_lsu"/>
</dbReference>
<dbReference type="InterPro" id="IPR015931">
    <property type="entry name" value="Acnase/IPM_dHydase_lsu_aba_1/3"/>
</dbReference>
<dbReference type="InterPro" id="IPR001030">
    <property type="entry name" value="Acoase/IPM_deHydtase_lsu_aba"/>
</dbReference>
<dbReference type="InterPro" id="IPR015928">
    <property type="entry name" value="Aconitase/3IPM_dehydase_swvl"/>
</dbReference>
<dbReference type="InterPro" id="IPR018136">
    <property type="entry name" value="Aconitase_4Fe-4S_BS"/>
</dbReference>
<dbReference type="InterPro" id="IPR036008">
    <property type="entry name" value="Aconitase_4Fe-4S_dom"/>
</dbReference>
<dbReference type="InterPro" id="IPR000573">
    <property type="entry name" value="AconitaseA/IPMdHydase_ssu_swvl"/>
</dbReference>
<dbReference type="InterPro" id="IPR050067">
    <property type="entry name" value="IPM_dehydratase_rel_enz"/>
</dbReference>
<dbReference type="InterPro" id="IPR033941">
    <property type="entry name" value="IPMI_cat"/>
</dbReference>
<dbReference type="NCBIfam" id="TIGR00170">
    <property type="entry name" value="leuC"/>
    <property type="match status" value="1"/>
</dbReference>
<dbReference type="NCBIfam" id="NF004016">
    <property type="entry name" value="PRK05478.1"/>
    <property type="match status" value="1"/>
</dbReference>
<dbReference type="NCBIfam" id="NF009116">
    <property type="entry name" value="PRK12466.1"/>
    <property type="match status" value="1"/>
</dbReference>
<dbReference type="PANTHER" id="PTHR43822:SF9">
    <property type="entry name" value="3-ISOPROPYLMALATE DEHYDRATASE"/>
    <property type="match status" value="1"/>
</dbReference>
<dbReference type="PANTHER" id="PTHR43822">
    <property type="entry name" value="HOMOACONITASE, MITOCHONDRIAL-RELATED"/>
    <property type="match status" value="1"/>
</dbReference>
<dbReference type="Pfam" id="PF00330">
    <property type="entry name" value="Aconitase"/>
    <property type="match status" value="1"/>
</dbReference>
<dbReference type="Pfam" id="PF00694">
    <property type="entry name" value="Aconitase_C"/>
    <property type="match status" value="1"/>
</dbReference>
<dbReference type="PRINTS" id="PR00415">
    <property type="entry name" value="ACONITASE"/>
</dbReference>
<dbReference type="SUPFAM" id="SSF53732">
    <property type="entry name" value="Aconitase iron-sulfur domain"/>
    <property type="match status" value="1"/>
</dbReference>
<dbReference type="SUPFAM" id="SSF52016">
    <property type="entry name" value="LeuD/IlvD-like"/>
    <property type="match status" value="1"/>
</dbReference>
<dbReference type="PROSITE" id="PS00450">
    <property type="entry name" value="ACONITASE_1"/>
    <property type="match status" value="1"/>
</dbReference>
<dbReference type="PROSITE" id="PS01244">
    <property type="entry name" value="ACONITASE_2"/>
    <property type="match status" value="1"/>
</dbReference>
<accession>P17279</accession>